<sequence>MTNTTSPAILNPIARPEVPQELAENIILTSLNDVYDWARLSSLWPLMYGTACCFIEFAAMIGSRFDFDRFGLVPRNSPRQADLIITSGTITMKMAPALVRLYEQMPSPKYVIAMGACTITGGMFSSDSYSAVRGVDKLIPVDVYLPGCPPRPEAIMDAIVKLRKKIANEHINERGNLAQTHRLFTAKHKMKPVPPILTGQYLNAPSRQAPPPALAAAMGIAVPALGEAVSETTSVAE</sequence>
<feature type="chain" id="PRO_0000358489" description="NAD(P)H-quinone oxidoreductase subunit K">
    <location>
        <begin position="1"/>
        <end position="237"/>
    </location>
</feature>
<feature type="binding site" evidence="1">
    <location>
        <position position="52"/>
    </location>
    <ligand>
        <name>[4Fe-4S] cluster</name>
        <dbReference type="ChEBI" id="CHEBI:49883"/>
    </ligand>
</feature>
<feature type="binding site" evidence="1">
    <location>
        <position position="53"/>
    </location>
    <ligand>
        <name>[4Fe-4S] cluster</name>
        <dbReference type="ChEBI" id="CHEBI:49883"/>
    </ligand>
</feature>
<feature type="binding site" evidence="1">
    <location>
        <position position="117"/>
    </location>
    <ligand>
        <name>[4Fe-4S] cluster</name>
        <dbReference type="ChEBI" id="CHEBI:49883"/>
    </ligand>
</feature>
<feature type="binding site" evidence="1">
    <location>
        <position position="148"/>
    </location>
    <ligand>
        <name>[4Fe-4S] cluster</name>
        <dbReference type="ChEBI" id="CHEBI:49883"/>
    </ligand>
</feature>
<feature type="strand" evidence="3">
    <location>
        <begin position="8"/>
        <end position="11"/>
    </location>
</feature>
<feature type="helix" evidence="3">
    <location>
        <begin position="26"/>
        <end position="40"/>
    </location>
</feature>
<feature type="strand" evidence="5">
    <location>
        <begin position="45"/>
        <end position="47"/>
    </location>
</feature>
<feature type="strand" evidence="2">
    <location>
        <begin position="49"/>
        <end position="51"/>
    </location>
</feature>
<feature type="helix" evidence="3">
    <location>
        <begin position="53"/>
        <end position="61"/>
    </location>
</feature>
<feature type="strand" evidence="3">
    <location>
        <begin position="62"/>
        <end position="65"/>
    </location>
</feature>
<feature type="helix" evidence="3">
    <location>
        <begin position="68"/>
        <end position="70"/>
    </location>
</feature>
<feature type="strand" evidence="3">
    <location>
        <begin position="75"/>
        <end position="77"/>
    </location>
</feature>
<feature type="helix" evidence="3">
    <location>
        <begin position="78"/>
        <end position="80"/>
    </location>
</feature>
<feature type="strand" evidence="3">
    <location>
        <begin position="82"/>
        <end position="86"/>
    </location>
</feature>
<feature type="helix" evidence="3">
    <location>
        <begin position="94"/>
        <end position="103"/>
    </location>
</feature>
<feature type="strand" evidence="3">
    <location>
        <begin position="110"/>
        <end position="115"/>
    </location>
</feature>
<feature type="helix" evidence="3">
    <location>
        <begin position="116"/>
        <end position="119"/>
    </location>
</feature>
<feature type="helix" evidence="3">
    <location>
        <begin position="122"/>
        <end position="124"/>
    </location>
</feature>
<feature type="strand" evidence="3">
    <location>
        <begin position="125"/>
        <end position="127"/>
    </location>
</feature>
<feature type="strand" evidence="3">
    <location>
        <begin position="129"/>
        <end position="131"/>
    </location>
</feature>
<feature type="helix" evidence="3">
    <location>
        <begin position="135"/>
        <end position="137"/>
    </location>
</feature>
<feature type="strand" evidence="3">
    <location>
        <begin position="142"/>
        <end position="145"/>
    </location>
</feature>
<feature type="strand" evidence="4">
    <location>
        <begin position="147"/>
        <end position="149"/>
    </location>
</feature>
<feature type="helix" evidence="3">
    <location>
        <begin position="152"/>
        <end position="166"/>
    </location>
</feature>
<feature type="turn" evidence="3">
    <location>
        <begin position="172"/>
        <end position="175"/>
    </location>
</feature>
<feature type="strand" evidence="3">
    <location>
        <begin position="176"/>
        <end position="178"/>
    </location>
</feature>
<feature type="strand" evidence="6">
    <location>
        <begin position="183"/>
        <end position="187"/>
    </location>
</feature>
<feature type="strand" evidence="3">
    <location>
        <begin position="201"/>
        <end position="204"/>
    </location>
</feature>
<feature type="strand" evidence="6">
    <location>
        <begin position="207"/>
        <end position="209"/>
    </location>
</feature>
<feature type="turn" evidence="6">
    <location>
        <begin position="212"/>
        <end position="216"/>
    </location>
</feature>
<name>NDHK_THEVB</name>
<gene>
    <name evidence="1" type="primary">ndhK</name>
    <name type="ordered locus">tlr0705</name>
</gene>
<accession>Q8DKZ4</accession>
<proteinExistence type="evidence at protein level"/>
<protein>
    <recommendedName>
        <fullName evidence="1">NAD(P)H-quinone oxidoreductase subunit K</fullName>
        <ecNumber evidence="1">7.1.1.-</ecNumber>
    </recommendedName>
    <alternativeName>
        <fullName evidence="1">NAD(P)H dehydrogenase I subunit K</fullName>
    </alternativeName>
    <alternativeName>
        <fullName evidence="1">NDH-1 subunit K</fullName>
        <shortName evidence="1">NDH-K</shortName>
    </alternativeName>
</protein>
<evidence type="ECO:0000255" key="1">
    <source>
        <dbReference type="HAMAP-Rule" id="MF_01356"/>
    </source>
</evidence>
<evidence type="ECO:0007829" key="2">
    <source>
        <dbReference type="PDB" id="6HUM"/>
    </source>
</evidence>
<evidence type="ECO:0007829" key="3">
    <source>
        <dbReference type="PDB" id="6KHI"/>
    </source>
</evidence>
<evidence type="ECO:0007829" key="4">
    <source>
        <dbReference type="PDB" id="6KHJ"/>
    </source>
</evidence>
<evidence type="ECO:0007829" key="5">
    <source>
        <dbReference type="PDB" id="6L7O"/>
    </source>
</evidence>
<evidence type="ECO:0007829" key="6">
    <source>
        <dbReference type="PDB" id="6NBQ"/>
    </source>
</evidence>
<organism>
    <name type="scientific">Thermosynechococcus vestitus (strain NIES-2133 / IAM M-273 / BP-1)</name>
    <dbReference type="NCBI Taxonomy" id="197221"/>
    <lineage>
        <taxon>Bacteria</taxon>
        <taxon>Bacillati</taxon>
        <taxon>Cyanobacteriota</taxon>
        <taxon>Cyanophyceae</taxon>
        <taxon>Acaryochloridales</taxon>
        <taxon>Thermosynechococcaceae</taxon>
        <taxon>Thermosynechococcus</taxon>
    </lineage>
</organism>
<keyword id="KW-0002">3D-structure</keyword>
<keyword id="KW-0004">4Fe-4S</keyword>
<keyword id="KW-0408">Iron</keyword>
<keyword id="KW-0411">Iron-sulfur</keyword>
<keyword id="KW-0472">Membrane</keyword>
<keyword id="KW-0479">Metal-binding</keyword>
<keyword id="KW-0520">NAD</keyword>
<keyword id="KW-0521">NADP</keyword>
<keyword id="KW-0618">Plastoquinone</keyword>
<keyword id="KW-0874">Quinone</keyword>
<keyword id="KW-1185">Reference proteome</keyword>
<keyword id="KW-0793">Thylakoid</keyword>
<keyword id="KW-1278">Translocase</keyword>
<keyword id="KW-0813">Transport</keyword>
<reference key="1">
    <citation type="journal article" date="2002" name="DNA Res.">
        <title>Complete genome structure of the thermophilic cyanobacterium Thermosynechococcus elongatus BP-1.</title>
        <authorList>
            <person name="Nakamura Y."/>
            <person name="Kaneko T."/>
            <person name="Sato S."/>
            <person name="Ikeuchi M."/>
            <person name="Katoh H."/>
            <person name="Sasamoto S."/>
            <person name="Watanabe A."/>
            <person name="Iriguchi M."/>
            <person name="Kawashima K."/>
            <person name="Kimura T."/>
            <person name="Kishida Y."/>
            <person name="Kiyokawa C."/>
            <person name="Kohara M."/>
            <person name="Matsumoto M."/>
            <person name="Matsuno A."/>
            <person name="Nakazaki N."/>
            <person name="Shimpo S."/>
            <person name="Sugimoto M."/>
            <person name="Takeuchi C."/>
            <person name="Yamada M."/>
            <person name="Tabata S."/>
        </authorList>
    </citation>
    <scope>NUCLEOTIDE SEQUENCE [LARGE SCALE GENOMIC DNA]</scope>
    <source>
        <strain>NIES-2133 / IAM M-273 / BP-1</strain>
    </source>
</reference>
<reference key="2">
    <citation type="journal article" date="2005" name="Biochem. J.">
        <title>Isolation, subunit composition and interaction of the NDH-1 complexes from Thermosynechococcus elongatus BP-1.</title>
        <authorList>
            <person name="Zhang P."/>
            <person name="Battchikova N."/>
            <person name="Paakkarinen V."/>
            <person name="Katoh H."/>
            <person name="Iwai M."/>
            <person name="Ikeuchi M."/>
            <person name="Pakrasi H.B."/>
            <person name="Ogawa T."/>
            <person name="Aro E.-M."/>
        </authorList>
    </citation>
    <scope>IDENTIFICATION BY MASS SPECTROMETRY</scope>
    <scope>CHARACTERIZATION AS A MEMBER OF THE NAD(P)H-QUINONE OXIDOREDUCTASE COMPLEX</scope>
    <scope>SUBCOMPLEXES OF NDH-1</scope>
</reference>
<comment type="function">
    <text evidence="1">NDH-1 shuttles electrons from an unknown electron donor, via FMN and iron-sulfur (Fe-S) centers, to quinones in the respiratory and/or the photosynthetic chain. The immediate electron acceptor for the enzyme in this species is believed to be plastoquinone. Couples the redox reaction to proton translocation, and thus conserves the redox energy in a proton gradient. Cyanobacterial NDH-1 also plays a role in inorganic carbon-concentration.</text>
</comment>
<comment type="catalytic activity">
    <reaction evidence="1">
        <text>a plastoquinone + NADH + (n+1) H(+)(in) = a plastoquinol + NAD(+) + n H(+)(out)</text>
        <dbReference type="Rhea" id="RHEA:42608"/>
        <dbReference type="Rhea" id="RHEA-COMP:9561"/>
        <dbReference type="Rhea" id="RHEA-COMP:9562"/>
        <dbReference type="ChEBI" id="CHEBI:15378"/>
        <dbReference type="ChEBI" id="CHEBI:17757"/>
        <dbReference type="ChEBI" id="CHEBI:57540"/>
        <dbReference type="ChEBI" id="CHEBI:57945"/>
        <dbReference type="ChEBI" id="CHEBI:62192"/>
    </reaction>
</comment>
<comment type="catalytic activity">
    <reaction evidence="1">
        <text>a plastoquinone + NADPH + (n+1) H(+)(in) = a plastoquinol + NADP(+) + n H(+)(out)</text>
        <dbReference type="Rhea" id="RHEA:42612"/>
        <dbReference type="Rhea" id="RHEA-COMP:9561"/>
        <dbReference type="Rhea" id="RHEA-COMP:9562"/>
        <dbReference type="ChEBI" id="CHEBI:15378"/>
        <dbReference type="ChEBI" id="CHEBI:17757"/>
        <dbReference type="ChEBI" id="CHEBI:57783"/>
        <dbReference type="ChEBI" id="CHEBI:58349"/>
        <dbReference type="ChEBI" id="CHEBI:62192"/>
    </reaction>
</comment>
<comment type="cofactor">
    <cofactor evidence="1">
        <name>[4Fe-4S] cluster</name>
        <dbReference type="ChEBI" id="CHEBI:49883"/>
    </cofactor>
    <text evidence="1">Binds 1 [4Fe-4S] cluster.</text>
</comment>
<comment type="subunit">
    <text evidence="1">NDH-1 can be composed of about 15 different subunits; different subcomplexes with different compositions have been identified which probably have different functions.</text>
</comment>
<comment type="subcellular location">
    <subcellularLocation>
        <location evidence="1">Cellular thylakoid membrane</location>
        <topology evidence="1">Peripheral membrane protein</topology>
        <orientation evidence="1">Cytoplasmic side</orientation>
    </subcellularLocation>
</comment>
<comment type="similarity">
    <text evidence="1">Belongs to the complex I 20 kDa subunit family.</text>
</comment>
<dbReference type="EC" id="7.1.1.-" evidence="1"/>
<dbReference type="EMBL" id="BA000039">
    <property type="protein sequence ID" value="BAC08256.1"/>
    <property type="molecule type" value="Genomic_DNA"/>
</dbReference>
<dbReference type="RefSeq" id="NP_681494.1">
    <property type="nucleotide sequence ID" value="NC_004113.1"/>
</dbReference>
<dbReference type="RefSeq" id="WP_011056552.1">
    <property type="nucleotide sequence ID" value="NC_004113.1"/>
</dbReference>
<dbReference type="PDB" id="6HUM">
    <property type="method" value="EM"/>
    <property type="resolution" value="3.34 A"/>
    <property type="chains" value="K=1-237"/>
</dbReference>
<dbReference type="PDB" id="6KHI">
    <property type="method" value="EM"/>
    <property type="resolution" value="3.00 A"/>
    <property type="chains" value="K=1-237"/>
</dbReference>
<dbReference type="PDB" id="6KHJ">
    <property type="method" value="EM"/>
    <property type="resolution" value="3.00 A"/>
    <property type="chains" value="K=1-237"/>
</dbReference>
<dbReference type="PDB" id="6L7O">
    <property type="method" value="EM"/>
    <property type="resolution" value="3.20 A"/>
    <property type="chains" value="K=1-237"/>
</dbReference>
<dbReference type="PDB" id="6L7P">
    <property type="method" value="EM"/>
    <property type="resolution" value="3.60 A"/>
    <property type="chains" value="K=1-237"/>
</dbReference>
<dbReference type="PDB" id="6NBQ">
    <property type="method" value="EM"/>
    <property type="resolution" value="3.10 A"/>
    <property type="chains" value="K=1-237"/>
</dbReference>
<dbReference type="PDB" id="6NBX">
    <property type="method" value="EM"/>
    <property type="resolution" value="3.50 A"/>
    <property type="chains" value="K=1-237"/>
</dbReference>
<dbReference type="PDB" id="6NBY">
    <property type="method" value="EM"/>
    <property type="resolution" value="3.10 A"/>
    <property type="chains" value="K=1-237"/>
</dbReference>
<dbReference type="PDB" id="6TJV">
    <property type="method" value="EM"/>
    <property type="resolution" value="3.20 A"/>
    <property type="chains" value="K=1-237"/>
</dbReference>
<dbReference type="PDBsum" id="6HUM"/>
<dbReference type="PDBsum" id="6KHI"/>
<dbReference type="PDBsum" id="6KHJ"/>
<dbReference type="PDBsum" id="6L7O"/>
<dbReference type="PDBsum" id="6L7P"/>
<dbReference type="PDBsum" id="6NBQ"/>
<dbReference type="PDBsum" id="6NBX"/>
<dbReference type="PDBsum" id="6NBY"/>
<dbReference type="PDBsum" id="6TJV"/>
<dbReference type="EMDB" id="EMD-0281"/>
<dbReference type="EMDB" id="EMD-0415"/>
<dbReference type="EMDB" id="EMD-0425"/>
<dbReference type="EMDB" id="EMD-0849"/>
<dbReference type="EMDB" id="EMD-0850"/>
<dbReference type="EMDB" id="EMD-10513"/>
<dbReference type="EMDB" id="EMD-9989"/>
<dbReference type="EMDB" id="EMD-9990"/>
<dbReference type="SMR" id="Q8DKZ4"/>
<dbReference type="IntAct" id="Q8DKZ4">
    <property type="interactions" value="1"/>
</dbReference>
<dbReference type="STRING" id="197221.gene:10747295"/>
<dbReference type="TCDB" id="3.D.1.8.2">
    <property type="family name" value="the h+ or na+-translocating nadh dehydrogenase (ndh) family"/>
</dbReference>
<dbReference type="EnsemblBacteria" id="BAC08256">
    <property type="protein sequence ID" value="BAC08256"/>
    <property type="gene ID" value="BAC08256"/>
</dbReference>
<dbReference type="KEGG" id="tel:tlr0705"/>
<dbReference type="PATRIC" id="fig|197221.4.peg.745"/>
<dbReference type="eggNOG" id="COG0377">
    <property type="taxonomic scope" value="Bacteria"/>
</dbReference>
<dbReference type="Proteomes" id="UP000000440">
    <property type="component" value="Chromosome"/>
</dbReference>
<dbReference type="GO" id="GO:0031676">
    <property type="term" value="C:plasma membrane-derived thylakoid membrane"/>
    <property type="evidence" value="ECO:0007669"/>
    <property type="project" value="UniProtKB-SubCell"/>
</dbReference>
<dbReference type="GO" id="GO:0045271">
    <property type="term" value="C:respiratory chain complex I"/>
    <property type="evidence" value="ECO:0007669"/>
    <property type="project" value="TreeGrafter"/>
</dbReference>
<dbReference type="GO" id="GO:0051539">
    <property type="term" value="F:4 iron, 4 sulfur cluster binding"/>
    <property type="evidence" value="ECO:0007669"/>
    <property type="project" value="UniProtKB-KW"/>
</dbReference>
<dbReference type="GO" id="GO:0005506">
    <property type="term" value="F:iron ion binding"/>
    <property type="evidence" value="ECO:0007669"/>
    <property type="project" value="UniProtKB-UniRule"/>
</dbReference>
<dbReference type="GO" id="GO:0008137">
    <property type="term" value="F:NADH dehydrogenase (ubiquinone) activity"/>
    <property type="evidence" value="ECO:0007669"/>
    <property type="project" value="InterPro"/>
</dbReference>
<dbReference type="GO" id="GO:0048038">
    <property type="term" value="F:quinone binding"/>
    <property type="evidence" value="ECO:0007669"/>
    <property type="project" value="UniProtKB-KW"/>
</dbReference>
<dbReference type="GO" id="GO:0009060">
    <property type="term" value="P:aerobic respiration"/>
    <property type="evidence" value="ECO:0007669"/>
    <property type="project" value="TreeGrafter"/>
</dbReference>
<dbReference type="GO" id="GO:0015990">
    <property type="term" value="P:electron transport coupled proton transport"/>
    <property type="evidence" value="ECO:0007669"/>
    <property type="project" value="TreeGrafter"/>
</dbReference>
<dbReference type="GO" id="GO:0019684">
    <property type="term" value="P:photosynthesis, light reaction"/>
    <property type="evidence" value="ECO:0007669"/>
    <property type="project" value="UniProtKB-UniRule"/>
</dbReference>
<dbReference type="FunFam" id="3.40.50.12280:FF:000003">
    <property type="entry name" value="NAD(P)H-quinone oxidoreductase subunit K, chloroplastic"/>
    <property type="match status" value="1"/>
</dbReference>
<dbReference type="Gene3D" id="3.40.50.12280">
    <property type="match status" value="1"/>
</dbReference>
<dbReference type="HAMAP" id="MF_01356">
    <property type="entry name" value="NDH1_NuoB"/>
    <property type="match status" value="1"/>
</dbReference>
<dbReference type="InterPro" id="IPR006137">
    <property type="entry name" value="NADH_UbQ_OxRdtase-like_20kDa"/>
</dbReference>
<dbReference type="InterPro" id="IPR006138">
    <property type="entry name" value="NADH_UQ_OxRdtase_20Kd_su"/>
</dbReference>
<dbReference type="NCBIfam" id="TIGR01957">
    <property type="entry name" value="nuoB_fam"/>
    <property type="match status" value="1"/>
</dbReference>
<dbReference type="NCBIfam" id="NF005012">
    <property type="entry name" value="PRK06411.1"/>
    <property type="match status" value="1"/>
</dbReference>
<dbReference type="PANTHER" id="PTHR11995">
    <property type="entry name" value="NADH DEHYDROGENASE"/>
    <property type="match status" value="1"/>
</dbReference>
<dbReference type="PANTHER" id="PTHR11995:SF14">
    <property type="entry name" value="NADH DEHYDROGENASE [UBIQUINONE] IRON-SULFUR PROTEIN 7, MITOCHONDRIAL"/>
    <property type="match status" value="1"/>
</dbReference>
<dbReference type="Pfam" id="PF01058">
    <property type="entry name" value="Oxidored_q6"/>
    <property type="match status" value="1"/>
</dbReference>
<dbReference type="SUPFAM" id="SSF56770">
    <property type="entry name" value="HydA/Nqo6-like"/>
    <property type="match status" value="1"/>
</dbReference>
<dbReference type="PROSITE" id="PS01150">
    <property type="entry name" value="COMPLEX1_20K"/>
    <property type="match status" value="1"/>
</dbReference>